<keyword id="KW-0106">Calcium</keyword>
<keyword id="KW-1015">Disulfide bond</keyword>
<keyword id="KW-0325">Glycoprotein</keyword>
<keyword id="KW-0326">Glycosidase</keyword>
<keyword id="KW-1032">Host cell membrane</keyword>
<keyword id="KW-1043">Host membrane</keyword>
<keyword id="KW-0378">Hydrolase</keyword>
<keyword id="KW-0472">Membrane</keyword>
<keyword id="KW-0479">Metal-binding</keyword>
<keyword id="KW-0735">Signal-anchor</keyword>
<keyword id="KW-0812">Transmembrane</keyword>
<keyword id="KW-1133">Transmembrane helix</keyword>
<keyword id="KW-0946">Virion</keyword>
<accession>Q6XV43</accession>
<feature type="chain" id="PRO_0000280132" description="Neuraminidase">
    <location>
        <begin position="1"/>
        <end position="470"/>
    </location>
</feature>
<feature type="topological domain" description="Intravirion" evidence="1">
    <location>
        <begin position="1"/>
        <end position="6"/>
    </location>
</feature>
<feature type="transmembrane region" description="Helical" evidence="1">
    <location>
        <begin position="7"/>
        <end position="29"/>
    </location>
</feature>
<feature type="topological domain" description="Virion surface" evidence="1">
    <location>
        <begin position="30"/>
        <end position="470"/>
    </location>
</feature>
<feature type="region of interest" description="Involved in apical transport and lipid raft association" evidence="1">
    <location>
        <begin position="11"/>
        <end position="33"/>
    </location>
</feature>
<feature type="region of interest" description="Hypervariable stalk region" evidence="1">
    <location>
        <begin position="36"/>
        <end position="88"/>
    </location>
</feature>
<feature type="region of interest" description="Head of neuraminidase" evidence="1">
    <location>
        <begin position="90"/>
        <end position="470"/>
    </location>
</feature>
<feature type="active site" description="Proton donor/acceptor" evidence="1">
    <location>
        <position position="150"/>
    </location>
</feature>
<feature type="active site" description="Nucleophile" evidence="1">
    <location>
        <position position="403"/>
    </location>
</feature>
<feature type="binding site" evidence="1">
    <location>
        <position position="117"/>
    </location>
    <ligand>
        <name>substrate</name>
    </ligand>
</feature>
<feature type="binding site" evidence="1">
    <location>
        <position position="151"/>
    </location>
    <ligand>
        <name>substrate</name>
    </ligand>
</feature>
<feature type="binding site" evidence="1">
    <location>
        <begin position="276"/>
        <end position="277"/>
    </location>
    <ligand>
        <name>substrate</name>
    </ligand>
</feature>
<feature type="binding site" evidence="1">
    <location>
        <position position="292"/>
    </location>
    <ligand>
        <name>substrate</name>
    </ligand>
</feature>
<feature type="binding site" evidence="1">
    <location>
        <position position="293"/>
    </location>
    <ligand>
        <name>Ca(2+)</name>
        <dbReference type="ChEBI" id="CHEBI:29108"/>
    </ligand>
</feature>
<feature type="binding site" evidence="1">
    <location>
        <position position="297"/>
    </location>
    <ligand>
        <name>Ca(2+)</name>
        <dbReference type="ChEBI" id="CHEBI:29108"/>
    </ligand>
</feature>
<feature type="binding site" evidence="1">
    <location>
        <position position="323"/>
    </location>
    <ligand>
        <name>Ca(2+)</name>
        <dbReference type="ChEBI" id="CHEBI:29108"/>
    </ligand>
</feature>
<feature type="binding site" evidence="1">
    <location>
        <position position="369"/>
    </location>
    <ligand>
        <name>substrate</name>
    </ligand>
</feature>
<feature type="glycosylation site" description="N-linked (GlcNAc...) asparagine; by host" evidence="1">
    <location>
        <position position="50"/>
    </location>
</feature>
<feature type="glycosylation site" description="N-linked (GlcNAc...) asparagine; by host" evidence="1">
    <location>
        <position position="57"/>
    </location>
</feature>
<feature type="glycosylation site" description="N-linked (GlcNAc...) asparagine; by host" evidence="1">
    <location>
        <position position="62"/>
    </location>
</feature>
<feature type="glycosylation site" description="N-linked (GlcNAc...) asparagine; by host" evidence="1">
    <location>
        <position position="69"/>
    </location>
</feature>
<feature type="glycosylation site" description="N-linked (GlcNAc...) asparagine; by host" evidence="1">
    <location>
        <position position="145"/>
    </location>
</feature>
<feature type="glycosylation site" description="N-linked (GlcNAc...) asparagine; by host" evidence="1">
    <location>
        <position position="399"/>
    </location>
</feature>
<feature type="glycosylation site" description="N-linked (GlcNAc...) asparagine; by host" evidence="1">
    <location>
        <position position="417"/>
    </location>
</feature>
<feature type="disulfide bond" evidence="1">
    <location>
        <begin position="91"/>
        <end position="418"/>
    </location>
</feature>
<feature type="disulfide bond" evidence="1">
    <location>
        <begin position="123"/>
        <end position="128"/>
    </location>
</feature>
<feature type="disulfide bond" evidence="1">
    <location>
        <begin position="183"/>
        <end position="230"/>
    </location>
</feature>
<feature type="disulfide bond" evidence="1">
    <location>
        <begin position="232"/>
        <end position="237"/>
    </location>
</feature>
<feature type="disulfide bond" evidence="1">
    <location>
        <begin position="278"/>
        <end position="291"/>
    </location>
</feature>
<feature type="disulfide bond" evidence="1">
    <location>
        <begin position="280"/>
        <end position="289"/>
    </location>
</feature>
<feature type="disulfide bond" evidence="1">
    <location>
        <begin position="317"/>
        <end position="334"/>
    </location>
</feature>
<feature type="disulfide bond" evidence="1">
    <location>
        <begin position="422"/>
        <end position="447"/>
    </location>
</feature>
<organismHost>
    <name type="scientific">Aves</name>
    <dbReference type="NCBI Taxonomy" id="8782"/>
</organismHost>
<reference key="1">
    <citation type="submission" date="2002-12" db="EMBL/GenBank/DDBJ databases">
        <title>Genetic analysis of multiple N3, N4, and N6 influenza A virus neuraminidase genes.</title>
        <authorList>
            <person name="Webby R.J."/>
            <person name="Humberd J.L."/>
            <person name="Krauss S.L."/>
        </authorList>
    </citation>
    <scope>NUCLEOTIDE SEQUENCE [GENOMIC RNA]</scope>
</reference>
<reference key="2">
    <citation type="journal article" date="2004" name="Virus Res.">
        <title>Assembly and budding of influenza virus.</title>
        <authorList>
            <person name="Nayak D.P."/>
            <person name="Hui E.K."/>
            <person name="Barman S."/>
        </authorList>
    </citation>
    <scope>REVIEW</scope>
</reference>
<reference key="3">
    <citation type="journal article" date="2005" name="N. Engl. J. Med.">
        <title>Neuraminidase inhibitors for influenza.</title>
        <authorList>
            <person name="Moscona A."/>
        </authorList>
    </citation>
    <scope>REVIEW</scope>
</reference>
<reference key="4">
    <citation type="journal article" date="2005" name="Biol. Pharm. Bull.">
        <title>Sialobiology of influenza: molecular mechanism of host range variation of influenza viruses.</title>
        <authorList>
            <person name="Suzuki Y."/>
        </authorList>
    </citation>
    <scope>REVIEW</scope>
</reference>
<dbReference type="EC" id="3.2.1.18" evidence="1"/>
<dbReference type="EMBL" id="AY207533">
    <property type="protein sequence ID" value="AAO62047.1"/>
    <property type="molecule type" value="Genomic_DNA"/>
</dbReference>
<dbReference type="SMR" id="Q6XV43"/>
<dbReference type="CAZy" id="GH34">
    <property type="family name" value="Glycoside Hydrolase Family 34"/>
</dbReference>
<dbReference type="GlyCosmos" id="Q6XV43">
    <property type="glycosylation" value="7 sites, No reported glycans"/>
</dbReference>
<dbReference type="PRO" id="PR:Q6XV43"/>
<dbReference type="Proteomes" id="UP000008575">
    <property type="component" value="Genome"/>
</dbReference>
<dbReference type="GO" id="GO:0020002">
    <property type="term" value="C:host cell plasma membrane"/>
    <property type="evidence" value="ECO:0007669"/>
    <property type="project" value="UniProtKB-SubCell"/>
</dbReference>
<dbReference type="GO" id="GO:0016020">
    <property type="term" value="C:membrane"/>
    <property type="evidence" value="ECO:0007669"/>
    <property type="project" value="UniProtKB-UniRule"/>
</dbReference>
<dbReference type="GO" id="GO:0055036">
    <property type="term" value="C:virion membrane"/>
    <property type="evidence" value="ECO:0007669"/>
    <property type="project" value="UniProtKB-SubCell"/>
</dbReference>
<dbReference type="GO" id="GO:0004308">
    <property type="term" value="F:exo-alpha-sialidase activity"/>
    <property type="evidence" value="ECO:0007669"/>
    <property type="project" value="UniProtKB-UniRule"/>
</dbReference>
<dbReference type="GO" id="GO:0046872">
    <property type="term" value="F:metal ion binding"/>
    <property type="evidence" value="ECO:0007669"/>
    <property type="project" value="UniProtKB-UniRule"/>
</dbReference>
<dbReference type="GO" id="GO:0005975">
    <property type="term" value="P:carbohydrate metabolic process"/>
    <property type="evidence" value="ECO:0007669"/>
    <property type="project" value="InterPro"/>
</dbReference>
<dbReference type="GO" id="GO:0046761">
    <property type="term" value="P:viral budding from plasma membrane"/>
    <property type="evidence" value="ECO:0007669"/>
    <property type="project" value="UniProtKB-UniRule"/>
</dbReference>
<dbReference type="Gene3D" id="2.120.10.10">
    <property type="match status" value="1"/>
</dbReference>
<dbReference type="HAMAP" id="MF_04071">
    <property type="entry name" value="INFV_NRAM"/>
    <property type="match status" value="1"/>
</dbReference>
<dbReference type="InterPro" id="IPR001860">
    <property type="entry name" value="Glyco_hydro_34"/>
</dbReference>
<dbReference type="InterPro" id="IPR036278">
    <property type="entry name" value="Sialidase_sf"/>
</dbReference>
<dbReference type="Pfam" id="PF00064">
    <property type="entry name" value="Neur"/>
    <property type="match status" value="1"/>
</dbReference>
<dbReference type="SUPFAM" id="SSF50939">
    <property type="entry name" value="Sialidases"/>
    <property type="match status" value="1"/>
</dbReference>
<sequence length="470" mass="51713">MNPNQKIITIGSVSIVLTTVGLLLQITSLCSIWFSHYNQVTQTNGQPCSNDTINYYNETFVNVTNVQNNYTTITEPSIPQAIHYSSGRDLCPVKGWAPLSKDNGIRIGSRGEVFVIREPFISCSINECRTFFLTQGALLNDKHSNGTVKDRSPFRTLMSCPIGVAPSPSNSRFESVAWSATACSDGPGWLTLGITGPDTTAVAVLKYNGVITDTLKSWKGNIMRTQESECVCQDEFCYTLVTDGPSDAQAFYKILKIKKGKIVGAKDVDATGFHFEECSCYPSGENVECVCRDNWRGSNRPWIRFNSDLDYQIGYVCSGVFGDNPRPVDGTGSCNSPVNNGKGRYGVKGFSFRYGDGVWIGRTKSLESRSGFEMVWDANGWVSTDKDSNGVQDIIDNDNWSGYSGSFSIRGETTGRNCTVPCFWVEMIRGQPKEKTIWTSGSSIAFCGVNSDTTSWSWPDGALLPFDIDK</sequence>
<gene>
    <name evidence="1" type="primary">NA</name>
</gene>
<name>NRAM_I79A7</name>
<comment type="function">
    <text evidence="1">Catalyzes the removal of terminal sialic acid residues from viral and cellular glycoconjugates. Cleaves off the terminal sialic acids on the glycosylated HA during virus budding to facilitate virus release. Additionally helps virus spread through the circulation by further removing sialic acids from the cell surface. These cleavages prevent self-aggregation and ensure the efficient spread of the progeny virus from cell to cell. Otherwise, infection would be limited to one round of replication. Described as a receptor-destroying enzyme because it cleaves a terminal sialic acid from the cellular receptors. May facilitate viral invasion of the upper airways by cleaving the sialic acid moieties on the mucin of the airway epithelial cells. Likely to plays a role in the budding process through its association with lipid rafts during intracellular transport. May additionally display a raft-association independent effect on budding. Plays a role in the determination of host range restriction on replication and virulence. Sialidase activity in late endosome/lysosome traffic seems to enhance virus replication.</text>
</comment>
<comment type="catalytic activity">
    <reaction evidence="1">
        <text>Hydrolysis of alpha-(2-&gt;3)-, alpha-(2-&gt;6)-, alpha-(2-&gt;8)- glycosidic linkages of terminal sialic acid residues in oligosaccharides, glycoproteins, glycolipids, colominic acid and synthetic substrates.</text>
        <dbReference type="EC" id="3.2.1.18"/>
    </reaction>
</comment>
<comment type="cofactor">
    <cofactor evidence="1">
        <name>Ca(2+)</name>
        <dbReference type="ChEBI" id="CHEBI:29108"/>
    </cofactor>
</comment>
<comment type="activity regulation">
    <text evidence="1">Inhibited by the neuraminidase inhibitors zanamivir (Relenza) and oseltamivir (Tamiflu). These drugs interfere with the release of progeny virus from infected cells and are effective against all influenza strains. Resistance to neuraminidase inhibitors is quite rare.</text>
</comment>
<comment type="subunit">
    <text evidence="1">Homotetramer.</text>
</comment>
<comment type="subcellular location">
    <subcellularLocation>
        <location evidence="1">Virion membrane</location>
    </subcellularLocation>
    <subcellularLocation>
        <location evidence="1">Host apical cell membrane</location>
        <topology evidence="1">Single-pass type II membrane protein</topology>
    </subcellularLocation>
    <text evidence="1">Preferentially accumulates at the apical plasma membrane in infected polarized epithelial cells, which is the virus assembly site. Uses lipid rafts for cell surface transport and apical sorting. In the virion, forms a mushroom-shaped spike on the surface of the membrane.</text>
</comment>
<comment type="domain">
    <text evidence="1">Intact N-terminus is essential for virion morphogenesis. Possesses two apical sorting signals, one in the ectodomain, which is likely to be a glycan, and the other in the transmembrane domain. The transmembrane domain also plays a role in lipid raft association.</text>
</comment>
<comment type="PTM">
    <text evidence="1">N-glycosylated.</text>
</comment>
<comment type="miscellaneous">
    <text>The influenza A genome consist of 8 RNA segments. Genetic variation of hemagglutinin and/or neuraminidase genes results in the emergence of new influenza strains. The mechanism of variation can be the result of point mutations or the result of genetic reassortment between segments of two different strains.</text>
</comment>
<comment type="similarity">
    <text evidence="1">Belongs to the glycosyl hydrolase 34 family.</text>
</comment>
<protein>
    <recommendedName>
        <fullName evidence="1">Neuraminidase</fullName>
        <ecNumber evidence="1">3.2.1.18</ecNumber>
    </recommendedName>
</protein>
<evidence type="ECO:0000255" key="1">
    <source>
        <dbReference type="HAMAP-Rule" id="MF_04071"/>
    </source>
</evidence>
<organism>
    <name type="scientific">Influenza A virus (strain A/Grey teal/Australia/2/1979 H4N4)</name>
    <dbReference type="NCBI Taxonomy" id="402464"/>
    <lineage>
        <taxon>Viruses</taxon>
        <taxon>Riboviria</taxon>
        <taxon>Orthornavirae</taxon>
        <taxon>Negarnaviricota</taxon>
        <taxon>Polyploviricotina</taxon>
        <taxon>Insthoviricetes</taxon>
        <taxon>Articulavirales</taxon>
        <taxon>Orthomyxoviridae</taxon>
        <taxon>Alphainfluenzavirus</taxon>
        <taxon>Alphainfluenzavirus influenzae</taxon>
        <taxon>Influenza A virus</taxon>
    </lineage>
</organism>
<proteinExistence type="inferred from homology"/>